<reference evidence="8" key="1">
    <citation type="journal article" date="2009" name="Nature">
        <title>Evolution of pathogenicity and sexual reproduction in eight Candida genomes.</title>
        <authorList>
            <person name="Butler G."/>
            <person name="Rasmussen M.D."/>
            <person name="Lin M.F."/>
            <person name="Santos M.A.S."/>
            <person name="Sakthikumar S."/>
            <person name="Munro C.A."/>
            <person name="Rheinbay E."/>
            <person name="Grabherr M."/>
            <person name="Forche A."/>
            <person name="Reedy J.L."/>
            <person name="Agrafioti I."/>
            <person name="Arnaud M.B."/>
            <person name="Bates S."/>
            <person name="Brown A.J.P."/>
            <person name="Brunke S."/>
            <person name="Costanzo M.C."/>
            <person name="Fitzpatrick D.A."/>
            <person name="de Groot P.W.J."/>
            <person name="Harris D."/>
            <person name="Hoyer L.L."/>
            <person name="Hube B."/>
            <person name="Klis F.M."/>
            <person name="Kodira C."/>
            <person name="Lennard N."/>
            <person name="Logue M.E."/>
            <person name="Martin R."/>
            <person name="Neiman A.M."/>
            <person name="Nikolaou E."/>
            <person name="Quail M.A."/>
            <person name="Quinn J."/>
            <person name="Santos M.C."/>
            <person name="Schmitzberger F.F."/>
            <person name="Sherlock G."/>
            <person name="Shah P."/>
            <person name="Silverstein K.A.T."/>
            <person name="Skrzypek M.S."/>
            <person name="Soll D."/>
            <person name="Staggs R."/>
            <person name="Stansfield I."/>
            <person name="Stumpf M.P.H."/>
            <person name="Sudbery P.E."/>
            <person name="Srikantha T."/>
            <person name="Zeng Q."/>
            <person name="Berman J."/>
            <person name="Berriman M."/>
            <person name="Heitman J."/>
            <person name="Gow N.A.R."/>
            <person name="Lorenz M.C."/>
            <person name="Birren B.W."/>
            <person name="Kellis M."/>
            <person name="Cuomo C.A."/>
        </authorList>
    </citation>
    <scope>NUCLEOTIDE SEQUENCE [LARGE SCALE GENOMIC DNA]</scope>
    <source>
        <strain evidence="8">ATCC MYA-3404 / T1</strain>
    </source>
</reference>
<reference evidence="5" key="2">
    <citation type="journal article" date="2022" name="Nat. Commun.">
        <title>A phylogenetically-restricted essential cell cycle progression factor in the human pathogen Candida albicans.</title>
        <authorList>
            <person name="Jaitly P."/>
            <person name="Legrand M."/>
            <person name="Das A."/>
            <person name="Patel T."/>
            <person name="Chauvel M."/>
            <person name="Maufrais C."/>
            <person name="d'Enfert C."/>
            <person name="Sanyal K."/>
        </authorList>
    </citation>
    <scope>FUNCTION</scope>
    <scope>SUBCELLULAR LOCATION</scope>
</reference>
<organism evidence="8">
    <name type="scientific">Candida tropicalis (strain ATCC MYA-3404 / T1)</name>
    <name type="common">Yeast</name>
    <dbReference type="NCBI Taxonomy" id="294747"/>
    <lineage>
        <taxon>Eukaryota</taxon>
        <taxon>Fungi</taxon>
        <taxon>Dikarya</taxon>
        <taxon>Ascomycota</taxon>
        <taxon>Saccharomycotina</taxon>
        <taxon>Pichiomycetes</taxon>
        <taxon>Debaryomycetaceae</taxon>
        <taxon>Candida/Lodderomyces clade</taxon>
        <taxon>Candida</taxon>
    </lineage>
</organism>
<protein>
    <recommendedName>
        <fullName evidence="5">Spindle pole body protein CSA6</fullName>
    </recommendedName>
    <alternativeName>
        <fullName evidence="4">Chromosomal stability protein 6</fullName>
        <shortName evidence="4">CtCSA6</shortName>
    </alternativeName>
</protein>
<gene>
    <name evidence="4" type="primary">CSA6</name>
    <name evidence="7" type="ORF">CTRG_01235</name>
</gene>
<accession>C5M5V4</accession>
<evidence type="ECO:0000250" key="1">
    <source>
        <dbReference type="UniProtKB" id="A0A1D8PGB8"/>
    </source>
</evidence>
<evidence type="ECO:0000256" key="2">
    <source>
        <dbReference type="SAM" id="MobiDB-lite"/>
    </source>
</evidence>
<evidence type="ECO:0000269" key="3">
    <source>
    </source>
</evidence>
<evidence type="ECO:0000303" key="4">
    <source>
    </source>
</evidence>
<evidence type="ECO:0000305" key="5"/>
<evidence type="ECO:0000305" key="6">
    <source>
    </source>
</evidence>
<evidence type="ECO:0000312" key="7">
    <source>
        <dbReference type="EMBL" id="EER34374.1"/>
    </source>
</evidence>
<evidence type="ECO:0000312" key="8">
    <source>
        <dbReference type="Proteomes" id="UP000002037"/>
    </source>
</evidence>
<feature type="chain" id="PRO_0000460033" description="Spindle pole body protein CSA6">
    <location>
        <begin position="1"/>
        <end position="506"/>
    </location>
</feature>
<feature type="region of interest" description="Disordered" evidence="2">
    <location>
        <begin position="18"/>
        <end position="121"/>
    </location>
</feature>
<feature type="region of interest" description="Disordered" evidence="2">
    <location>
        <begin position="252"/>
        <end position="276"/>
    </location>
</feature>
<feature type="region of interest" description="Disordered" evidence="2">
    <location>
        <begin position="329"/>
        <end position="429"/>
    </location>
</feature>
<feature type="region of interest" description="Disordered" evidence="2">
    <location>
        <begin position="447"/>
        <end position="470"/>
    </location>
</feature>
<feature type="compositionally biased region" description="Basic and acidic residues" evidence="2">
    <location>
        <begin position="38"/>
        <end position="48"/>
    </location>
</feature>
<feature type="compositionally biased region" description="Polar residues" evidence="2">
    <location>
        <begin position="50"/>
        <end position="59"/>
    </location>
</feature>
<feature type="compositionally biased region" description="Basic and acidic residues" evidence="2">
    <location>
        <begin position="63"/>
        <end position="72"/>
    </location>
</feature>
<feature type="compositionally biased region" description="Polar residues" evidence="2">
    <location>
        <begin position="94"/>
        <end position="119"/>
    </location>
</feature>
<feature type="compositionally biased region" description="Polar residues" evidence="2">
    <location>
        <begin position="330"/>
        <end position="353"/>
    </location>
</feature>
<feature type="compositionally biased region" description="Polar residues" evidence="2">
    <location>
        <begin position="361"/>
        <end position="389"/>
    </location>
</feature>
<feature type="compositionally biased region" description="Basic and acidic residues" evidence="2">
    <location>
        <begin position="412"/>
        <end position="422"/>
    </location>
</feature>
<feature type="compositionally biased region" description="Basic and acidic residues" evidence="2">
    <location>
        <begin position="461"/>
        <end position="470"/>
    </location>
</feature>
<comment type="function">
    <text evidence="1 3">Plays a role in mitotic spindle pole body organization, possibly at the point of spindle pole body separation (PubMed:35869076). Required for mitotic exit (By similarity).</text>
</comment>
<comment type="subcellular location">
    <subcellularLocation>
        <location evidence="6">Cytoplasm</location>
        <location evidence="6">Cytoskeleton</location>
        <location evidence="6">Microtubule organizing center</location>
        <location evidence="6">Spindle pole body</location>
    </subcellularLocation>
</comment>
<dbReference type="EMBL" id="GG692396">
    <property type="protein sequence ID" value="EER34374.1"/>
    <property type="molecule type" value="Genomic_DNA"/>
</dbReference>
<dbReference type="RefSeq" id="XP_002546929.1">
    <property type="nucleotide sequence ID" value="XM_002546883.1"/>
</dbReference>
<dbReference type="SMR" id="C5M5V4"/>
<dbReference type="EnsemblFungi" id="CTRG_01235-t43_1">
    <property type="protein sequence ID" value="CTRG_01235-t43_1-p1"/>
    <property type="gene ID" value="CTRG_01235"/>
</dbReference>
<dbReference type="GeneID" id="8297507"/>
<dbReference type="KEGG" id="ctp:CTRG_01235"/>
<dbReference type="VEuPathDB" id="FungiDB:CTRG_01235"/>
<dbReference type="HOGENOM" id="CLU_538594_0_0_1"/>
<dbReference type="OrthoDB" id="10267903at2759"/>
<dbReference type="Proteomes" id="UP000002037">
    <property type="component" value="Unassembled WGS sequence"/>
</dbReference>
<dbReference type="GO" id="GO:0005737">
    <property type="term" value="C:cytoplasm"/>
    <property type="evidence" value="ECO:0007669"/>
    <property type="project" value="UniProtKB-KW"/>
</dbReference>
<dbReference type="GO" id="GO:0044732">
    <property type="term" value="C:mitotic spindle pole body"/>
    <property type="evidence" value="ECO:0000314"/>
    <property type="project" value="UniProtKB"/>
</dbReference>
<dbReference type="GO" id="GO:1905047">
    <property type="term" value="P:mitotic spindle pole body organization"/>
    <property type="evidence" value="ECO:0000316"/>
    <property type="project" value="UniProtKB"/>
</dbReference>
<proteinExistence type="inferred from homology"/>
<keyword id="KW-0963">Cytoplasm</keyword>
<keyword id="KW-0206">Cytoskeleton</keyword>
<keyword id="KW-1185">Reference proteome</keyword>
<sequence length="506" mass="58106">MADATEDILRRFDCKASSPIKVPNNLSQSYQMADDSSIDLRDYMDRQKSSRNYSDSEYTPSPIKREKPETKQSAHLSTTTRLPPISPKKLFASPTKNYSQHVMQERSAPNSPQKKSLPNENDDLKNLRLEMKRLKQEYNVKIENLNYKLNLITKERDEIMKENIELTSDKSRLKTQNDLLSVDNDNLLKRKFESEKQLKNSEMKILSLEDKVEKLVSLNKSVTVKNMTMKQSLEGIQVKLKKYYDLYKECQEKHNNPQDSPPKVKIATPDPEVETQNKALQPQLQIQELVQALKNLTIAIESKNDIPSSELHYLVKILKELIAKDIFRPSSPNHQTQPVFQSTPQSKVESVNLENVPPESQPSHVSSNSQQNLSDKSRTSIPSRDNPSPNVLRAEEPQDFHNANPIQSQPKEWTREREERDGSTGYSIRSDMAEIKEFLKFLVDGVKNDQKDTNSPEESNTDGKEEEEKVHIEDKSCHCKPVSNHAAFCPVCLNREDFTVSHFLSQ</sequence>
<name>CSA6_CANTT</name>